<name>CARB_OENOB</name>
<accession>Q04H29</accession>
<organism>
    <name type="scientific">Oenococcus oeni (strain ATCC BAA-331 / PSU-1)</name>
    <dbReference type="NCBI Taxonomy" id="203123"/>
    <lineage>
        <taxon>Bacteria</taxon>
        <taxon>Bacillati</taxon>
        <taxon>Bacillota</taxon>
        <taxon>Bacilli</taxon>
        <taxon>Lactobacillales</taxon>
        <taxon>Lactobacillaceae</taxon>
        <taxon>Oenococcus</taxon>
    </lineage>
</organism>
<keyword id="KW-0028">Amino-acid biosynthesis</keyword>
<keyword id="KW-0055">Arginine biosynthesis</keyword>
<keyword id="KW-0067">ATP-binding</keyword>
<keyword id="KW-0436">Ligase</keyword>
<keyword id="KW-0460">Magnesium</keyword>
<keyword id="KW-0464">Manganese</keyword>
<keyword id="KW-0479">Metal-binding</keyword>
<keyword id="KW-0547">Nucleotide-binding</keyword>
<keyword id="KW-0665">Pyrimidine biosynthesis</keyword>
<keyword id="KW-1185">Reference proteome</keyword>
<keyword id="KW-0677">Repeat</keyword>
<sequence length="1064" mass="117869">MPKRADIKKILVIGSGPIIIGQAAEFDYSGTQASLSLREEGYSVVLVNSNPATIMTDTEIADQVYIEPLTLPFIKRILRKERPDALLATIGGQTALNLAKELAEDGILEELKIELLGTKLKAIEAAEDREKFKQLMEALKEPVPESRIARTLEQAVHFADQIGYPIIVRPAYTLGGTGGEIVENSEQLTEVAKNGLELSPVTQVLIEKSIAGYKEIEFEVMRDGNDNALIVASMENFDPVGIHTVDSIVVSPVQTLSDREYQMLRDAALKIIRALKIEGGVNIQLALDPDSLRYYIIEVNPRVSRSSALASKATGYPIAKMAAKIAIGLTLDEIVNPVTGTTKAEFEPALDYVAVKIPRWPFDKFAEADRELGTQMKATGEVMAIGRNFETALMKAIRSLEIGTFALDDLTYSDLSNQDLLNRLMPATDERLFMVADLLRRGITIGQIHEKSQIDEFFLDKILHLIEIEKELKMHVLDFKILKIAKENGFPDVTIARYWQLEEKELRHLRKKEDLFPVYKMVDTVAGEFSSKTPYYYSTYELENESLKEKRPSVLVVGSGPIRIGQGVEFDYATVHCVKAIQKAGYKAIVINSNPETVSTDFSVSDKLYFEPLTLEDVLNVIDLEKPIGVVVQFGGQTAINLAGRLENNGVKLLGTSLKDINRSEDREDFNQVIKKLDLSQPFGKTATTVTQALSVAEEVGYPLLIRPSYVLGGRAMEIVTNRQDLSDYMKRAVKVSLKHPVLIDSYLTGREAEIDLLSDGQTIIVPGIMEHIERAGVHSGDSMSVYPSQYLDQNVQEQMLDAAFKLAKELHTIGLMNVQFVIHEQQAYVIEVNPRASRTLPFISKATDLPLAQLATRVMLGEKLADLGFKSGLMAPKKLVYVKALVFSFNKLPKVDSSLGPEMKSTGEVMGVDRNLAKALYKAFVAAGFKVHEHGNVLFTIADRDKKEALALAKRFDELGYVLWATAGTSSFLHENHLPVRQLGKISEDQLNPVTAMRQGKLQIVINRLKTDEPLESDGRAIRAAAIENGVPLFTSLDTVAAFLQVLESRSFNVSAINKGDKS</sequence>
<dbReference type="EC" id="6.3.4.16" evidence="1"/>
<dbReference type="EC" id="6.3.5.5" evidence="1"/>
<dbReference type="EMBL" id="CP000411">
    <property type="protein sequence ID" value="ABJ56243.1"/>
    <property type="molecule type" value="Genomic_DNA"/>
</dbReference>
<dbReference type="RefSeq" id="WP_011677393.1">
    <property type="nucleotide sequence ID" value="NC_008528.1"/>
</dbReference>
<dbReference type="SMR" id="Q04H29"/>
<dbReference type="STRING" id="203123.OEOE_0261"/>
<dbReference type="KEGG" id="ooe:OEOE_0261"/>
<dbReference type="PATRIC" id="fig|203123.7.peg.269"/>
<dbReference type="eggNOG" id="COG0458">
    <property type="taxonomic scope" value="Bacteria"/>
</dbReference>
<dbReference type="HOGENOM" id="CLU_000513_1_2_9"/>
<dbReference type="UniPathway" id="UPA00068">
    <property type="reaction ID" value="UER00171"/>
</dbReference>
<dbReference type="UniPathway" id="UPA00070">
    <property type="reaction ID" value="UER00115"/>
</dbReference>
<dbReference type="Proteomes" id="UP000000774">
    <property type="component" value="Chromosome"/>
</dbReference>
<dbReference type="GO" id="GO:0005737">
    <property type="term" value="C:cytoplasm"/>
    <property type="evidence" value="ECO:0007669"/>
    <property type="project" value="TreeGrafter"/>
</dbReference>
<dbReference type="GO" id="GO:0005524">
    <property type="term" value="F:ATP binding"/>
    <property type="evidence" value="ECO:0007669"/>
    <property type="project" value="UniProtKB-UniRule"/>
</dbReference>
<dbReference type="GO" id="GO:0004087">
    <property type="term" value="F:carbamoyl-phosphate synthase (ammonia) activity"/>
    <property type="evidence" value="ECO:0007669"/>
    <property type="project" value="RHEA"/>
</dbReference>
<dbReference type="GO" id="GO:0004088">
    <property type="term" value="F:carbamoyl-phosphate synthase (glutamine-hydrolyzing) activity"/>
    <property type="evidence" value="ECO:0007669"/>
    <property type="project" value="UniProtKB-UniRule"/>
</dbReference>
<dbReference type="GO" id="GO:0046872">
    <property type="term" value="F:metal ion binding"/>
    <property type="evidence" value="ECO:0007669"/>
    <property type="project" value="UniProtKB-KW"/>
</dbReference>
<dbReference type="GO" id="GO:0044205">
    <property type="term" value="P:'de novo' UMP biosynthetic process"/>
    <property type="evidence" value="ECO:0007669"/>
    <property type="project" value="UniProtKB-UniRule"/>
</dbReference>
<dbReference type="GO" id="GO:0006541">
    <property type="term" value="P:glutamine metabolic process"/>
    <property type="evidence" value="ECO:0007669"/>
    <property type="project" value="TreeGrafter"/>
</dbReference>
<dbReference type="GO" id="GO:0006526">
    <property type="term" value="P:L-arginine biosynthetic process"/>
    <property type="evidence" value="ECO:0007669"/>
    <property type="project" value="UniProtKB-UniRule"/>
</dbReference>
<dbReference type="CDD" id="cd01424">
    <property type="entry name" value="MGS_CPS_II"/>
    <property type="match status" value="1"/>
</dbReference>
<dbReference type="FunFam" id="1.10.1030.10:FF:000002">
    <property type="entry name" value="Carbamoyl-phosphate synthase large chain"/>
    <property type="match status" value="1"/>
</dbReference>
<dbReference type="FunFam" id="3.30.1490.20:FF:000001">
    <property type="entry name" value="Carbamoyl-phosphate synthase large chain"/>
    <property type="match status" value="1"/>
</dbReference>
<dbReference type="FunFam" id="3.30.470.20:FF:000001">
    <property type="entry name" value="Carbamoyl-phosphate synthase large chain"/>
    <property type="match status" value="1"/>
</dbReference>
<dbReference type="FunFam" id="3.30.470.20:FF:000026">
    <property type="entry name" value="Carbamoyl-phosphate synthase large chain"/>
    <property type="match status" value="1"/>
</dbReference>
<dbReference type="FunFam" id="3.40.50.20:FF:000001">
    <property type="entry name" value="Carbamoyl-phosphate synthase large chain"/>
    <property type="match status" value="2"/>
</dbReference>
<dbReference type="Gene3D" id="3.40.50.20">
    <property type="match status" value="2"/>
</dbReference>
<dbReference type="Gene3D" id="3.30.470.20">
    <property type="entry name" value="ATP-grasp fold, B domain"/>
    <property type="match status" value="2"/>
</dbReference>
<dbReference type="Gene3D" id="1.10.1030.10">
    <property type="entry name" value="Carbamoyl-phosphate synthetase, large subunit oligomerisation domain"/>
    <property type="match status" value="1"/>
</dbReference>
<dbReference type="Gene3D" id="3.40.50.1380">
    <property type="entry name" value="Methylglyoxal synthase-like domain"/>
    <property type="match status" value="1"/>
</dbReference>
<dbReference type="HAMAP" id="MF_01210_B">
    <property type="entry name" value="CPSase_L_chain_B"/>
    <property type="match status" value="1"/>
</dbReference>
<dbReference type="InterPro" id="IPR011761">
    <property type="entry name" value="ATP-grasp"/>
</dbReference>
<dbReference type="InterPro" id="IPR006275">
    <property type="entry name" value="CarbamoylP_synth_lsu"/>
</dbReference>
<dbReference type="InterPro" id="IPR005480">
    <property type="entry name" value="CarbamoylP_synth_lsu_oligo"/>
</dbReference>
<dbReference type="InterPro" id="IPR036897">
    <property type="entry name" value="CarbamoylP_synth_lsu_oligo_sf"/>
</dbReference>
<dbReference type="InterPro" id="IPR005479">
    <property type="entry name" value="CbamoylP_synth_lsu-like_ATP-bd"/>
</dbReference>
<dbReference type="InterPro" id="IPR005483">
    <property type="entry name" value="CbamoylP_synth_lsu_CPSase_dom"/>
</dbReference>
<dbReference type="InterPro" id="IPR011607">
    <property type="entry name" value="MGS-like_dom"/>
</dbReference>
<dbReference type="InterPro" id="IPR036914">
    <property type="entry name" value="MGS-like_dom_sf"/>
</dbReference>
<dbReference type="InterPro" id="IPR033937">
    <property type="entry name" value="MGS_CPS_CarB"/>
</dbReference>
<dbReference type="InterPro" id="IPR016185">
    <property type="entry name" value="PreATP-grasp_dom_sf"/>
</dbReference>
<dbReference type="NCBIfam" id="TIGR01369">
    <property type="entry name" value="CPSaseII_lrg"/>
    <property type="match status" value="1"/>
</dbReference>
<dbReference type="NCBIfam" id="NF003671">
    <property type="entry name" value="PRK05294.1"/>
    <property type="match status" value="1"/>
</dbReference>
<dbReference type="NCBIfam" id="NF009455">
    <property type="entry name" value="PRK12815.1"/>
    <property type="match status" value="1"/>
</dbReference>
<dbReference type="PANTHER" id="PTHR11405:SF53">
    <property type="entry name" value="CARBAMOYL-PHOSPHATE SYNTHASE [AMMONIA], MITOCHONDRIAL"/>
    <property type="match status" value="1"/>
</dbReference>
<dbReference type="PANTHER" id="PTHR11405">
    <property type="entry name" value="CARBAMOYLTRANSFERASE FAMILY MEMBER"/>
    <property type="match status" value="1"/>
</dbReference>
<dbReference type="Pfam" id="PF02786">
    <property type="entry name" value="CPSase_L_D2"/>
    <property type="match status" value="2"/>
</dbReference>
<dbReference type="Pfam" id="PF02787">
    <property type="entry name" value="CPSase_L_D3"/>
    <property type="match status" value="1"/>
</dbReference>
<dbReference type="Pfam" id="PF02142">
    <property type="entry name" value="MGS"/>
    <property type="match status" value="1"/>
</dbReference>
<dbReference type="PRINTS" id="PR00098">
    <property type="entry name" value="CPSASE"/>
</dbReference>
<dbReference type="SMART" id="SM01096">
    <property type="entry name" value="CPSase_L_D3"/>
    <property type="match status" value="1"/>
</dbReference>
<dbReference type="SMART" id="SM00851">
    <property type="entry name" value="MGS"/>
    <property type="match status" value="1"/>
</dbReference>
<dbReference type="SUPFAM" id="SSF48108">
    <property type="entry name" value="Carbamoyl phosphate synthetase, large subunit connection domain"/>
    <property type="match status" value="1"/>
</dbReference>
<dbReference type="SUPFAM" id="SSF56059">
    <property type="entry name" value="Glutathione synthetase ATP-binding domain-like"/>
    <property type="match status" value="2"/>
</dbReference>
<dbReference type="SUPFAM" id="SSF52335">
    <property type="entry name" value="Methylglyoxal synthase-like"/>
    <property type="match status" value="1"/>
</dbReference>
<dbReference type="SUPFAM" id="SSF52440">
    <property type="entry name" value="PreATP-grasp domain"/>
    <property type="match status" value="2"/>
</dbReference>
<dbReference type="PROSITE" id="PS50975">
    <property type="entry name" value="ATP_GRASP"/>
    <property type="match status" value="2"/>
</dbReference>
<dbReference type="PROSITE" id="PS00866">
    <property type="entry name" value="CPSASE_1"/>
    <property type="match status" value="2"/>
</dbReference>
<dbReference type="PROSITE" id="PS00867">
    <property type="entry name" value="CPSASE_2"/>
    <property type="match status" value="2"/>
</dbReference>
<dbReference type="PROSITE" id="PS51855">
    <property type="entry name" value="MGS"/>
    <property type="match status" value="1"/>
</dbReference>
<gene>
    <name evidence="1" type="primary">carB</name>
    <name type="ordered locus">OEOE_0261</name>
</gene>
<protein>
    <recommendedName>
        <fullName evidence="1">Carbamoyl phosphate synthase large chain</fullName>
        <ecNumber evidence="1">6.3.4.16</ecNumber>
        <ecNumber evidence="1">6.3.5.5</ecNumber>
    </recommendedName>
    <alternativeName>
        <fullName evidence="1">Carbamoyl phosphate synthetase ammonia chain</fullName>
    </alternativeName>
</protein>
<evidence type="ECO:0000255" key="1">
    <source>
        <dbReference type="HAMAP-Rule" id="MF_01210"/>
    </source>
</evidence>
<feature type="chain" id="PRO_1000066374" description="Carbamoyl phosphate synthase large chain">
    <location>
        <begin position="1"/>
        <end position="1064"/>
    </location>
</feature>
<feature type="domain" description="ATP-grasp 1" evidence="1">
    <location>
        <begin position="133"/>
        <end position="327"/>
    </location>
</feature>
<feature type="domain" description="ATP-grasp 2" evidence="1">
    <location>
        <begin position="671"/>
        <end position="861"/>
    </location>
</feature>
<feature type="domain" description="MGS-like" evidence="1">
    <location>
        <begin position="930"/>
        <end position="1064"/>
    </location>
</feature>
<feature type="region of interest" description="Carboxyphosphate synthetic domain" evidence="1">
    <location>
        <begin position="1"/>
        <end position="401"/>
    </location>
</feature>
<feature type="region of interest" description="Oligomerization domain" evidence="1">
    <location>
        <begin position="402"/>
        <end position="546"/>
    </location>
</feature>
<feature type="region of interest" description="Carbamoyl phosphate synthetic domain" evidence="1">
    <location>
        <begin position="547"/>
        <end position="929"/>
    </location>
</feature>
<feature type="region of interest" description="Allosteric domain" evidence="1">
    <location>
        <begin position="930"/>
        <end position="1064"/>
    </location>
</feature>
<feature type="binding site" evidence="1">
    <location>
        <position position="129"/>
    </location>
    <ligand>
        <name>ATP</name>
        <dbReference type="ChEBI" id="CHEBI:30616"/>
        <label>1</label>
    </ligand>
</feature>
<feature type="binding site" evidence="1">
    <location>
        <position position="169"/>
    </location>
    <ligand>
        <name>ATP</name>
        <dbReference type="ChEBI" id="CHEBI:30616"/>
        <label>1</label>
    </ligand>
</feature>
<feature type="binding site" evidence="1">
    <location>
        <position position="175"/>
    </location>
    <ligand>
        <name>ATP</name>
        <dbReference type="ChEBI" id="CHEBI:30616"/>
        <label>1</label>
    </ligand>
</feature>
<feature type="binding site" evidence="1">
    <location>
        <position position="176"/>
    </location>
    <ligand>
        <name>ATP</name>
        <dbReference type="ChEBI" id="CHEBI:30616"/>
        <label>1</label>
    </ligand>
</feature>
<feature type="binding site" evidence="1">
    <location>
        <position position="208"/>
    </location>
    <ligand>
        <name>ATP</name>
        <dbReference type="ChEBI" id="CHEBI:30616"/>
        <label>1</label>
    </ligand>
</feature>
<feature type="binding site" evidence="1">
    <location>
        <position position="210"/>
    </location>
    <ligand>
        <name>ATP</name>
        <dbReference type="ChEBI" id="CHEBI:30616"/>
        <label>1</label>
    </ligand>
</feature>
<feature type="binding site" evidence="1">
    <location>
        <position position="215"/>
    </location>
    <ligand>
        <name>ATP</name>
        <dbReference type="ChEBI" id="CHEBI:30616"/>
        <label>1</label>
    </ligand>
</feature>
<feature type="binding site" evidence="1">
    <location>
        <position position="241"/>
    </location>
    <ligand>
        <name>ATP</name>
        <dbReference type="ChEBI" id="CHEBI:30616"/>
        <label>1</label>
    </ligand>
</feature>
<feature type="binding site" evidence="1">
    <location>
        <position position="242"/>
    </location>
    <ligand>
        <name>ATP</name>
        <dbReference type="ChEBI" id="CHEBI:30616"/>
        <label>1</label>
    </ligand>
</feature>
<feature type="binding site" evidence="1">
    <location>
        <position position="243"/>
    </location>
    <ligand>
        <name>ATP</name>
        <dbReference type="ChEBI" id="CHEBI:30616"/>
        <label>1</label>
    </ligand>
</feature>
<feature type="binding site" evidence="1">
    <location>
        <position position="284"/>
    </location>
    <ligand>
        <name>ATP</name>
        <dbReference type="ChEBI" id="CHEBI:30616"/>
        <label>1</label>
    </ligand>
</feature>
<feature type="binding site" evidence="1">
    <location>
        <position position="284"/>
    </location>
    <ligand>
        <name>Mg(2+)</name>
        <dbReference type="ChEBI" id="CHEBI:18420"/>
        <label>1</label>
    </ligand>
</feature>
<feature type="binding site" evidence="1">
    <location>
        <position position="284"/>
    </location>
    <ligand>
        <name>Mn(2+)</name>
        <dbReference type="ChEBI" id="CHEBI:29035"/>
        <label>1</label>
    </ligand>
</feature>
<feature type="binding site" evidence="1">
    <location>
        <position position="298"/>
    </location>
    <ligand>
        <name>ATP</name>
        <dbReference type="ChEBI" id="CHEBI:30616"/>
        <label>1</label>
    </ligand>
</feature>
<feature type="binding site" evidence="1">
    <location>
        <position position="298"/>
    </location>
    <ligand>
        <name>Mg(2+)</name>
        <dbReference type="ChEBI" id="CHEBI:18420"/>
        <label>1</label>
    </ligand>
</feature>
<feature type="binding site" evidence="1">
    <location>
        <position position="298"/>
    </location>
    <ligand>
        <name>Mg(2+)</name>
        <dbReference type="ChEBI" id="CHEBI:18420"/>
        <label>2</label>
    </ligand>
</feature>
<feature type="binding site" evidence="1">
    <location>
        <position position="298"/>
    </location>
    <ligand>
        <name>Mn(2+)</name>
        <dbReference type="ChEBI" id="CHEBI:29035"/>
        <label>1</label>
    </ligand>
</feature>
<feature type="binding site" evidence="1">
    <location>
        <position position="298"/>
    </location>
    <ligand>
        <name>Mn(2+)</name>
        <dbReference type="ChEBI" id="CHEBI:29035"/>
        <label>2</label>
    </ligand>
</feature>
<feature type="binding site" evidence="1">
    <location>
        <position position="300"/>
    </location>
    <ligand>
        <name>Mg(2+)</name>
        <dbReference type="ChEBI" id="CHEBI:18420"/>
        <label>2</label>
    </ligand>
</feature>
<feature type="binding site" evidence="1">
    <location>
        <position position="300"/>
    </location>
    <ligand>
        <name>Mn(2+)</name>
        <dbReference type="ChEBI" id="CHEBI:29035"/>
        <label>2</label>
    </ligand>
</feature>
<feature type="binding site" evidence="1">
    <location>
        <position position="707"/>
    </location>
    <ligand>
        <name>ATP</name>
        <dbReference type="ChEBI" id="CHEBI:30616"/>
        <label>2</label>
    </ligand>
</feature>
<feature type="binding site" evidence="1">
    <location>
        <position position="746"/>
    </location>
    <ligand>
        <name>ATP</name>
        <dbReference type="ChEBI" id="CHEBI:30616"/>
        <label>2</label>
    </ligand>
</feature>
<feature type="binding site" evidence="1">
    <location>
        <position position="748"/>
    </location>
    <ligand>
        <name>ATP</name>
        <dbReference type="ChEBI" id="CHEBI:30616"/>
        <label>2</label>
    </ligand>
</feature>
<feature type="binding site" evidence="1">
    <location>
        <position position="752"/>
    </location>
    <ligand>
        <name>ATP</name>
        <dbReference type="ChEBI" id="CHEBI:30616"/>
        <label>2</label>
    </ligand>
</feature>
<feature type="binding site" evidence="1">
    <location>
        <position position="777"/>
    </location>
    <ligand>
        <name>ATP</name>
        <dbReference type="ChEBI" id="CHEBI:30616"/>
        <label>2</label>
    </ligand>
</feature>
<feature type="binding site" evidence="1">
    <location>
        <position position="778"/>
    </location>
    <ligand>
        <name>ATP</name>
        <dbReference type="ChEBI" id="CHEBI:30616"/>
        <label>2</label>
    </ligand>
</feature>
<feature type="binding site" evidence="1">
    <location>
        <position position="779"/>
    </location>
    <ligand>
        <name>ATP</name>
        <dbReference type="ChEBI" id="CHEBI:30616"/>
        <label>2</label>
    </ligand>
</feature>
<feature type="binding site" evidence="1">
    <location>
        <position position="780"/>
    </location>
    <ligand>
        <name>ATP</name>
        <dbReference type="ChEBI" id="CHEBI:30616"/>
        <label>2</label>
    </ligand>
</feature>
<feature type="binding site" evidence="1">
    <location>
        <position position="820"/>
    </location>
    <ligand>
        <name>ATP</name>
        <dbReference type="ChEBI" id="CHEBI:30616"/>
        <label>2</label>
    </ligand>
</feature>
<feature type="binding site" evidence="1">
    <location>
        <position position="820"/>
    </location>
    <ligand>
        <name>Mg(2+)</name>
        <dbReference type="ChEBI" id="CHEBI:18420"/>
        <label>3</label>
    </ligand>
</feature>
<feature type="binding site" evidence="1">
    <location>
        <position position="820"/>
    </location>
    <ligand>
        <name>Mn(2+)</name>
        <dbReference type="ChEBI" id="CHEBI:29035"/>
        <label>3</label>
    </ligand>
</feature>
<feature type="binding site" evidence="1">
    <location>
        <position position="832"/>
    </location>
    <ligand>
        <name>ATP</name>
        <dbReference type="ChEBI" id="CHEBI:30616"/>
        <label>2</label>
    </ligand>
</feature>
<feature type="binding site" evidence="1">
    <location>
        <position position="832"/>
    </location>
    <ligand>
        <name>Mg(2+)</name>
        <dbReference type="ChEBI" id="CHEBI:18420"/>
        <label>3</label>
    </ligand>
</feature>
<feature type="binding site" evidence="1">
    <location>
        <position position="832"/>
    </location>
    <ligand>
        <name>Mg(2+)</name>
        <dbReference type="ChEBI" id="CHEBI:18420"/>
        <label>4</label>
    </ligand>
</feature>
<feature type="binding site" evidence="1">
    <location>
        <position position="832"/>
    </location>
    <ligand>
        <name>Mn(2+)</name>
        <dbReference type="ChEBI" id="CHEBI:29035"/>
        <label>3</label>
    </ligand>
</feature>
<feature type="binding site" evidence="1">
    <location>
        <position position="832"/>
    </location>
    <ligand>
        <name>Mn(2+)</name>
        <dbReference type="ChEBI" id="CHEBI:29035"/>
        <label>4</label>
    </ligand>
</feature>
<feature type="binding site" evidence="1">
    <location>
        <position position="834"/>
    </location>
    <ligand>
        <name>Mg(2+)</name>
        <dbReference type="ChEBI" id="CHEBI:18420"/>
        <label>4</label>
    </ligand>
</feature>
<feature type="binding site" evidence="1">
    <location>
        <position position="834"/>
    </location>
    <ligand>
        <name>Mn(2+)</name>
        <dbReference type="ChEBI" id="CHEBI:29035"/>
        <label>4</label>
    </ligand>
</feature>
<comment type="function">
    <text evidence="1">Large subunit of the glutamine-dependent carbamoyl phosphate synthetase (CPSase). CPSase catalyzes the formation of carbamoyl phosphate from the ammonia moiety of glutamine, carbonate, and phosphate donated by ATP, constituting the first step of 2 biosynthetic pathways, one leading to arginine and/or urea and the other to pyrimidine nucleotides. The large subunit (synthetase) binds the substrates ammonia (free or transferred from glutamine from the small subunit), hydrogencarbonate and ATP and carries out an ATP-coupled ligase reaction, activating hydrogencarbonate by forming carboxy phosphate which reacts with ammonia to form carbamoyl phosphate.</text>
</comment>
<comment type="catalytic activity">
    <reaction evidence="1">
        <text>hydrogencarbonate + L-glutamine + 2 ATP + H2O = carbamoyl phosphate + L-glutamate + 2 ADP + phosphate + 2 H(+)</text>
        <dbReference type="Rhea" id="RHEA:18633"/>
        <dbReference type="ChEBI" id="CHEBI:15377"/>
        <dbReference type="ChEBI" id="CHEBI:15378"/>
        <dbReference type="ChEBI" id="CHEBI:17544"/>
        <dbReference type="ChEBI" id="CHEBI:29985"/>
        <dbReference type="ChEBI" id="CHEBI:30616"/>
        <dbReference type="ChEBI" id="CHEBI:43474"/>
        <dbReference type="ChEBI" id="CHEBI:58228"/>
        <dbReference type="ChEBI" id="CHEBI:58359"/>
        <dbReference type="ChEBI" id="CHEBI:456216"/>
        <dbReference type="EC" id="6.3.5.5"/>
    </reaction>
</comment>
<comment type="catalytic activity">
    <molecule>Carbamoyl phosphate synthase large chain</molecule>
    <reaction evidence="1">
        <text>hydrogencarbonate + NH4(+) + 2 ATP = carbamoyl phosphate + 2 ADP + phosphate + 2 H(+)</text>
        <dbReference type="Rhea" id="RHEA:18029"/>
        <dbReference type="ChEBI" id="CHEBI:15378"/>
        <dbReference type="ChEBI" id="CHEBI:17544"/>
        <dbReference type="ChEBI" id="CHEBI:28938"/>
        <dbReference type="ChEBI" id="CHEBI:30616"/>
        <dbReference type="ChEBI" id="CHEBI:43474"/>
        <dbReference type="ChEBI" id="CHEBI:58228"/>
        <dbReference type="ChEBI" id="CHEBI:456216"/>
        <dbReference type="EC" id="6.3.4.16"/>
    </reaction>
</comment>
<comment type="cofactor">
    <cofactor evidence="1">
        <name>Mg(2+)</name>
        <dbReference type="ChEBI" id="CHEBI:18420"/>
    </cofactor>
    <cofactor evidence="1">
        <name>Mn(2+)</name>
        <dbReference type="ChEBI" id="CHEBI:29035"/>
    </cofactor>
    <text evidence="1">Binds 4 Mg(2+) or Mn(2+) ions per subunit.</text>
</comment>
<comment type="pathway">
    <text evidence="1">Amino-acid biosynthesis; L-arginine biosynthesis; carbamoyl phosphate from bicarbonate: step 1/1.</text>
</comment>
<comment type="pathway">
    <text evidence="1">Pyrimidine metabolism; UMP biosynthesis via de novo pathway; (S)-dihydroorotate from bicarbonate: step 1/3.</text>
</comment>
<comment type="subunit">
    <text evidence="1">Composed of two chains; the small (or glutamine) chain promotes the hydrolysis of glutamine to ammonia, which is used by the large (or ammonia) chain to synthesize carbamoyl phosphate. Tetramer of heterodimers (alpha,beta)4.</text>
</comment>
<comment type="domain">
    <text evidence="1">The large subunit is composed of 2 ATP-grasp domains that are involved in binding the 2 ATP molecules needed for carbamoyl phosphate synthesis. The N-terminal ATP-grasp domain (referred to as the carboxyphosphate synthetic component) catalyzes the ATP-dependent phosphorylation of hydrogencarbonate to carboxyphosphate and the subsequent nucleophilic attack by ammonia to form a carbamate intermediate. The C-terminal ATP-grasp domain (referred to as the carbamoyl phosphate synthetic component) then catalyzes the phosphorylation of carbamate with the second ATP to form the end product carbamoyl phosphate. The reactive and unstable enzyme intermediates are sequentially channeled from one active site to the next through the interior of the protein over a distance of at least 96 A.</text>
</comment>
<comment type="similarity">
    <text evidence="1">Belongs to the CarB family.</text>
</comment>
<proteinExistence type="inferred from homology"/>
<reference key="1">
    <citation type="journal article" date="2006" name="Proc. Natl. Acad. Sci. U.S.A.">
        <title>Comparative genomics of the lactic acid bacteria.</title>
        <authorList>
            <person name="Makarova K.S."/>
            <person name="Slesarev A."/>
            <person name="Wolf Y.I."/>
            <person name="Sorokin A."/>
            <person name="Mirkin B."/>
            <person name="Koonin E.V."/>
            <person name="Pavlov A."/>
            <person name="Pavlova N."/>
            <person name="Karamychev V."/>
            <person name="Polouchine N."/>
            <person name="Shakhova V."/>
            <person name="Grigoriev I."/>
            <person name="Lou Y."/>
            <person name="Rohksar D."/>
            <person name="Lucas S."/>
            <person name="Huang K."/>
            <person name="Goodstein D.M."/>
            <person name="Hawkins T."/>
            <person name="Plengvidhya V."/>
            <person name="Welker D."/>
            <person name="Hughes J."/>
            <person name="Goh Y."/>
            <person name="Benson A."/>
            <person name="Baldwin K."/>
            <person name="Lee J.-H."/>
            <person name="Diaz-Muniz I."/>
            <person name="Dosti B."/>
            <person name="Smeianov V."/>
            <person name="Wechter W."/>
            <person name="Barabote R."/>
            <person name="Lorca G."/>
            <person name="Altermann E."/>
            <person name="Barrangou R."/>
            <person name="Ganesan B."/>
            <person name="Xie Y."/>
            <person name="Rawsthorne H."/>
            <person name="Tamir D."/>
            <person name="Parker C."/>
            <person name="Breidt F."/>
            <person name="Broadbent J.R."/>
            <person name="Hutkins R."/>
            <person name="O'Sullivan D."/>
            <person name="Steele J."/>
            <person name="Unlu G."/>
            <person name="Saier M.H. Jr."/>
            <person name="Klaenhammer T."/>
            <person name="Richardson P."/>
            <person name="Kozyavkin S."/>
            <person name="Weimer B.C."/>
            <person name="Mills D.A."/>
        </authorList>
    </citation>
    <scope>NUCLEOTIDE SEQUENCE [LARGE SCALE GENOMIC DNA]</scope>
    <source>
        <strain>ATCC BAA-331 / PSU-1</strain>
    </source>
</reference>